<dbReference type="EC" id="3.2.1.52" evidence="1"/>
<dbReference type="EMBL" id="CP001321">
    <property type="protein sequence ID" value="ACL32632.1"/>
    <property type="molecule type" value="Genomic_DNA"/>
</dbReference>
<dbReference type="RefSeq" id="WP_015939571.1">
    <property type="nucleotide sequence ID" value="NC_011852.1"/>
</dbReference>
<dbReference type="SMR" id="B8F5N0"/>
<dbReference type="STRING" id="557723.HAPS_1013"/>
<dbReference type="CAZy" id="GH3">
    <property type="family name" value="Glycoside Hydrolase Family 3"/>
</dbReference>
<dbReference type="KEGG" id="hap:HAPS_1013"/>
<dbReference type="PATRIC" id="fig|557723.8.peg.1011"/>
<dbReference type="HOGENOM" id="CLU_008392_0_0_6"/>
<dbReference type="UniPathway" id="UPA00544"/>
<dbReference type="Proteomes" id="UP000006743">
    <property type="component" value="Chromosome"/>
</dbReference>
<dbReference type="GO" id="GO:0005737">
    <property type="term" value="C:cytoplasm"/>
    <property type="evidence" value="ECO:0007669"/>
    <property type="project" value="UniProtKB-SubCell"/>
</dbReference>
<dbReference type="GO" id="GO:0004563">
    <property type="term" value="F:beta-N-acetylhexosaminidase activity"/>
    <property type="evidence" value="ECO:0007669"/>
    <property type="project" value="UniProtKB-UniRule"/>
</dbReference>
<dbReference type="GO" id="GO:0005975">
    <property type="term" value="P:carbohydrate metabolic process"/>
    <property type="evidence" value="ECO:0007669"/>
    <property type="project" value="InterPro"/>
</dbReference>
<dbReference type="GO" id="GO:0051301">
    <property type="term" value="P:cell division"/>
    <property type="evidence" value="ECO:0007669"/>
    <property type="project" value="UniProtKB-KW"/>
</dbReference>
<dbReference type="GO" id="GO:0071555">
    <property type="term" value="P:cell wall organization"/>
    <property type="evidence" value="ECO:0007669"/>
    <property type="project" value="UniProtKB-KW"/>
</dbReference>
<dbReference type="GO" id="GO:0009252">
    <property type="term" value="P:peptidoglycan biosynthetic process"/>
    <property type="evidence" value="ECO:0007669"/>
    <property type="project" value="UniProtKB-KW"/>
</dbReference>
<dbReference type="GO" id="GO:0009254">
    <property type="term" value="P:peptidoglycan turnover"/>
    <property type="evidence" value="ECO:0007669"/>
    <property type="project" value="UniProtKB-UniRule"/>
</dbReference>
<dbReference type="GO" id="GO:0008360">
    <property type="term" value="P:regulation of cell shape"/>
    <property type="evidence" value="ECO:0007669"/>
    <property type="project" value="UniProtKB-KW"/>
</dbReference>
<dbReference type="FunFam" id="3.20.20.300:FF:000001">
    <property type="entry name" value="Beta-hexosaminidase"/>
    <property type="match status" value="1"/>
</dbReference>
<dbReference type="Gene3D" id="3.20.20.300">
    <property type="entry name" value="Glycoside hydrolase, family 3, N-terminal domain"/>
    <property type="match status" value="1"/>
</dbReference>
<dbReference type="HAMAP" id="MF_00364">
    <property type="entry name" value="NagZ"/>
    <property type="match status" value="1"/>
</dbReference>
<dbReference type="InterPro" id="IPR022956">
    <property type="entry name" value="Beta_hexosaminidase_bac"/>
</dbReference>
<dbReference type="InterPro" id="IPR019800">
    <property type="entry name" value="Glyco_hydro_3_AS"/>
</dbReference>
<dbReference type="InterPro" id="IPR001764">
    <property type="entry name" value="Glyco_hydro_3_N"/>
</dbReference>
<dbReference type="InterPro" id="IPR036962">
    <property type="entry name" value="Glyco_hydro_3_N_sf"/>
</dbReference>
<dbReference type="InterPro" id="IPR017853">
    <property type="entry name" value="Glycoside_hydrolase_SF"/>
</dbReference>
<dbReference type="InterPro" id="IPR050226">
    <property type="entry name" value="NagZ_Beta-hexosaminidase"/>
</dbReference>
<dbReference type="NCBIfam" id="NF003740">
    <property type="entry name" value="PRK05337.1"/>
    <property type="match status" value="1"/>
</dbReference>
<dbReference type="PANTHER" id="PTHR30480:SF13">
    <property type="entry name" value="BETA-HEXOSAMINIDASE"/>
    <property type="match status" value="1"/>
</dbReference>
<dbReference type="PANTHER" id="PTHR30480">
    <property type="entry name" value="BETA-HEXOSAMINIDASE-RELATED"/>
    <property type="match status" value="1"/>
</dbReference>
<dbReference type="Pfam" id="PF00933">
    <property type="entry name" value="Glyco_hydro_3"/>
    <property type="match status" value="1"/>
</dbReference>
<dbReference type="SUPFAM" id="SSF51445">
    <property type="entry name" value="(Trans)glycosidases"/>
    <property type="match status" value="1"/>
</dbReference>
<dbReference type="PROSITE" id="PS00775">
    <property type="entry name" value="GLYCOSYL_HYDROL_F3"/>
    <property type="match status" value="1"/>
</dbReference>
<keyword id="KW-0131">Cell cycle</keyword>
<keyword id="KW-0132">Cell division</keyword>
<keyword id="KW-0133">Cell shape</keyword>
<keyword id="KW-0961">Cell wall biogenesis/degradation</keyword>
<keyword id="KW-0963">Cytoplasm</keyword>
<keyword id="KW-0326">Glycosidase</keyword>
<keyword id="KW-0378">Hydrolase</keyword>
<keyword id="KW-0573">Peptidoglycan synthesis</keyword>
<keyword id="KW-1185">Reference proteome</keyword>
<organism>
    <name type="scientific">Glaesserella parasuis serovar 5 (strain SH0165)</name>
    <name type="common">Haemophilus parasuis</name>
    <dbReference type="NCBI Taxonomy" id="557723"/>
    <lineage>
        <taxon>Bacteria</taxon>
        <taxon>Pseudomonadati</taxon>
        <taxon>Pseudomonadota</taxon>
        <taxon>Gammaproteobacteria</taxon>
        <taxon>Pasteurellales</taxon>
        <taxon>Pasteurellaceae</taxon>
        <taxon>Glaesserella</taxon>
    </lineage>
</organism>
<sequence length="340" mass="38363">MLLIDLAGYELTQEEQELLEHPLVSGLILFTRNFHDKAQLQALIKSVRQRVKKPLLITVDQEGGRVQRFREGFTKLPAMQSFLQLDRLQLAQEAGWLMSAEMFALDIDLSFAPVLDLGHCSKAIGDRSFGEDVATMLPVAEAFIDGMREIGMAATGKHFPGHGHVIADSHLETPFDDRPKETIFNHDIQPFKQLIAKGKLSAIMPAHVIYTQCDSQPASGSSYWLKEILRKQLQFNGVIFSDDLGMKGAGFMGNYVERSEKALQAGCDLLLLCNEPDGVVQVLDNLKYQPTPTQKERYLSLMKRKQISWSELTASPRWQQAHQQLATLQDQWLEWKAQNA</sequence>
<protein>
    <recommendedName>
        <fullName evidence="1">Beta-hexosaminidase</fullName>
        <ecNumber evidence="1">3.2.1.52</ecNumber>
    </recommendedName>
    <alternativeName>
        <fullName evidence="1">Beta-N-acetylhexosaminidase</fullName>
    </alternativeName>
    <alternativeName>
        <fullName evidence="1">N-acetyl-beta-glucosaminidase</fullName>
    </alternativeName>
</protein>
<comment type="function">
    <text evidence="1">Plays a role in peptidoglycan recycling by cleaving the terminal beta-1,4-linked N-acetylglucosamine (GlcNAc) from peptide-linked peptidoglycan fragments, giving rise to free GlcNAc, anhydro-N-acetylmuramic acid and anhydro-N-acetylmuramic acid-linked peptides.</text>
</comment>
<comment type="catalytic activity">
    <reaction evidence="1">
        <text>Hydrolysis of terminal non-reducing N-acetyl-D-hexosamine residues in N-acetyl-beta-D-hexosaminides.</text>
        <dbReference type="EC" id="3.2.1.52"/>
    </reaction>
</comment>
<comment type="pathway">
    <text evidence="1">Cell wall biogenesis; peptidoglycan recycling.</text>
</comment>
<comment type="subcellular location">
    <subcellularLocation>
        <location evidence="1">Cytoplasm</location>
    </subcellularLocation>
</comment>
<comment type="similarity">
    <text evidence="1">Belongs to the glycosyl hydrolase 3 family. NagZ subfamily.</text>
</comment>
<proteinExistence type="inferred from homology"/>
<accession>B8F5N0</accession>
<evidence type="ECO:0000255" key="1">
    <source>
        <dbReference type="HAMAP-Rule" id="MF_00364"/>
    </source>
</evidence>
<name>NAGZ_GLAP5</name>
<feature type="chain" id="PRO_1000133665" description="Beta-hexosaminidase">
    <location>
        <begin position="1"/>
        <end position="340"/>
    </location>
</feature>
<feature type="active site" description="Proton donor/acceptor" evidence="1">
    <location>
        <position position="170"/>
    </location>
</feature>
<feature type="active site" description="Nucleophile" evidence="1">
    <location>
        <position position="242"/>
    </location>
</feature>
<feature type="binding site" evidence="1">
    <location>
        <position position="60"/>
    </location>
    <ligand>
        <name>substrate</name>
    </ligand>
</feature>
<feature type="binding site" evidence="1">
    <location>
        <position position="68"/>
    </location>
    <ligand>
        <name>substrate</name>
    </ligand>
</feature>
<feature type="binding site" evidence="1">
    <location>
        <position position="127"/>
    </location>
    <ligand>
        <name>substrate</name>
    </ligand>
</feature>
<feature type="binding site" evidence="1">
    <location>
        <begin position="157"/>
        <end position="158"/>
    </location>
    <ligand>
        <name>substrate</name>
    </ligand>
</feature>
<feature type="site" description="Important for catalytic activity" evidence="1">
    <location>
        <position position="168"/>
    </location>
</feature>
<gene>
    <name evidence="1" type="primary">nagZ</name>
    <name type="ordered locus">HAPS_1013</name>
</gene>
<reference key="1">
    <citation type="journal article" date="2009" name="J. Bacteriol.">
        <title>Complete genome sequence of Haemophilus parasuis SH0165.</title>
        <authorList>
            <person name="Yue M."/>
            <person name="Yang F."/>
            <person name="Yang J."/>
            <person name="Bei W."/>
            <person name="Cai X."/>
            <person name="Chen L."/>
            <person name="Dong J."/>
            <person name="Zhou R."/>
            <person name="Jin M."/>
            <person name="Jin Q."/>
            <person name="Chen H."/>
        </authorList>
    </citation>
    <scope>NUCLEOTIDE SEQUENCE [LARGE SCALE GENOMIC DNA]</scope>
    <source>
        <strain>SH0165</strain>
    </source>
</reference>